<organism>
    <name type="scientific">Methylocella silvestris (strain DSM 15510 / CIP 108128 / LMG 27833 / NCIMB 13906 / BL2)</name>
    <dbReference type="NCBI Taxonomy" id="395965"/>
    <lineage>
        <taxon>Bacteria</taxon>
        <taxon>Pseudomonadati</taxon>
        <taxon>Pseudomonadota</taxon>
        <taxon>Alphaproteobacteria</taxon>
        <taxon>Hyphomicrobiales</taxon>
        <taxon>Beijerinckiaceae</taxon>
        <taxon>Methylocella</taxon>
    </lineage>
</organism>
<proteinExistence type="inferred from homology"/>
<accession>B8EIB7</accession>
<comment type="subcellular location">
    <subcellularLocation>
        <location evidence="1">Cytoplasm</location>
    </subcellularLocation>
</comment>
<comment type="similarity">
    <text evidence="1">Belongs to the TACO1 family.</text>
</comment>
<sequence length="248" mass="26948">MAGHSQFKNIMHKKGKQDAIRSKLFSKLAREITVAAKLGLPDPNMNARLRAAVIAARVENMPKDNIERAIKKASGADAENYDEVRYEGYGPGGVAVIVEALTDNRNRTAGEIRSYFTKVGGALAETGAVSFMFDHIGRIEFPAKVGSEEAMLEAAIEAGAEDVLSGEEGHEVLTSLEMLRDVALALEAKFGEPTRASLIWKPQNTISLDDETGEKVLRLIGLLEDNDDVQNVYANYEVSEAVLAKLEA</sequence>
<keyword id="KW-0963">Cytoplasm</keyword>
<keyword id="KW-0238">DNA-binding</keyword>
<keyword id="KW-1185">Reference proteome</keyword>
<keyword id="KW-0804">Transcription</keyword>
<keyword id="KW-0805">Transcription regulation</keyword>
<protein>
    <recommendedName>
        <fullName evidence="1">Probable transcriptional regulatory protein Msil_2305</fullName>
    </recommendedName>
</protein>
<feature type="chain" id="PRO_1000200101" description="Probable transcriptional regulatory protein Msil_2305">
    <location>
        <begin position="1"/>
        <end position="248"/>
    </location>
</feature>
<evidence type="ECO:0000255" key="1">
    <source>
        <dbReference type="HAMAP-Rule" id="MF_00693"/>
    </source>
</evidence>
<name>Y2305_METSB</name>
<reference key="1">
    <citation type="journal article" date="2010" name="J. Bacteriol.">
        <title>Complete genome sequence of the aerobic facultative methanotroph Methylocella silvestris BL2.</title>
        <authorList>
            <person name="Chen Y."/>
            <person name="Crombie A."/>
            <person name="Rahman M.T."/>
            <person name="Dedysh S.N."/>
            <person name="Liesack W."/>
            <person name="Stott M.B."/>
            <person name="Alam M."/>
            <person name="Theisen A.R."/>
            <person name="Murrell J.C."/>
            <person name="Dunfield P.F."/>
        </authorList>
    </citation>
    <scope>NUCLEOTIDE SEQUENCE [LARGE SCALE GENOMIC DNA]</scope>
    <source>
        <strain>DSM 15510 / CIP 108128 / LMG 27833 / NCIMB 13906 / BL2</strain>
    </source>
</reference>
<gene>
    <name type="ordered locus">Msil_2305</name>
</gene>
<dbReference type="EMBL" id="CP001280">
    <property type="protein sequence ID" value="ACK51236.1"/>
    <property type="molecule type" value="Genomic_DNA"/>
</dbReference>
<dbReference type="RefSeq" id="WP_012591305.1">
    <property type="nucleotide sequence ID" value="NC_011666.1"/>
</dbReference>
<dbReference type="SMR" id="B8EIB7"/>
<dbReference type="STRING" id="395965.Msil_2305"/>
<dbReference type="KEGG" id="msl:Msil_2305"/>
<dbReference type="eggNOG" id="COG0217">
    <property type="taxonomic scope" value="Bacteria"/>
</dbReference>
<dbReference type="HOGENOM" id="CLU_062974_2_2_5"/>
<dbReference type="OrthoDB" id="9781053at2"/>
<dbReference type="Proteomes" id="UP000002257">
    <property type="component" value="Chromosome"/>
</dbReference>
<dbReference type="GO" id="GO:0005829">
    <property type="term" value="C:cytosol"/>
    <property type="evidence" value="ECO:0007669"/>
    <property type="project" value="TreeGrafter"/>
</dbReference>
<dbReference type="GO" id="GO:0003677">
    <property type="term" value="F:DNA binding"/>
    <property type="evidence" value="ECO:0007669"/>
    <property type="project" value="UniProtKB-UniRule"/>
</dbReference>
<dbReference type="GO" id="GO:0006355">
    <property type="term" value="P:regulation of DNA-templated transcription"/>
    <property type="evidence" value="ECO:0007669"/>
    <property type="project" value="UniProtKB-UniRule"/>
</dbReference>
<dbReference type="FunFam" id="1.10.10.200:FF:000002">
    <property type="entry name" value="Probable transcriptional regulatory protein CLM62_37755"/>
    <property type="match status" value="1"/>
</dbReference>
<dbReference type="Gene3D" id="1.10.10.200">
    <property type="match status" value="1"/>
</dbReference>
<dbReference type="Gene3D" id="3.30.70.980">
    <property type="match status" value="2"/>
</dbReference>
<dbReference type="HAMAP" id="MF_00693">
    <property type="entry name" value="Transcrip_reg_TACO1"/>
    <property type="match status" value="1"/>
</dbReference>
<dbReference type="InterPro" id="IPR017856">
    <property type="entry name" value="Integrase-like_N"/>
</dbReference>
<dbReference type="InterPro" id="IPR048300">
    <property type="entry name" value="TACO1_YebC-like_2nd/3rd_dom"/>
</dbReference>
<dbReference type="InterPro" id="IPR049083">
    <property type="entry name" value="TACO1_YebC_N"/>
</dbReference>
<dbReference type="InterPro" id="IPR002876">
    <property type="entry name" value="Transcrip_reg_TACO1-like"/>
</dbReference>
<dbReference type="InterPro" id="IPR026564">
    <property type="entry name" value="Transcrip_reg_TACO1-like_dom3"/>
</dbReference>
<dbReference type="InterPro" id="IPR029072">
    <property type="entry name" value="YebC-like"/>
</dbReference>
<dbReference type="NCBIfam" id="NF001030">
    <property type="entry name" value="PRK00110.1"/>
    <property type="match status" value="1"/>
</dbReference>
<dbReference type="NCBIfam" id="NF009044">
    <property type="entry name" value="PRK12378.1"/>
    <property type="match status" value="1"/>
</dbReference>
<dbReference type="NCBIfam" id="TIGR01033">
    <property type="entry name" value="YebC/PmpR family DNA-binding transcriptional regulator"/>
    <property type="match status" value="1"/>
</dbReference>
<dbReference type="PANTHER" id="PTHR12532:SF6">
    <property type="entry name" value="TRANSCRIPTIONAL REGULATORY PROTEIN YEBC-RELATED"/>
    <property type="match status" value="1"/>
</dbReference>
<dbReference type="PANTHER" id="PTHR12532">
    <property type="entry name" value="TRANSLATIONAL ACTIVATOR OF CYTOCHROME C OXIDASE 1"/>
    <property type="match status" value="1"/>
</dbReference>
<dbReference type="Pfam" id="PF20772">
    <property type="entry name" value="TACO1_YebC_N"/>
    <property type="match status" value="1"/>
</dbReference>
<dbReference type="Pfam" id="PF01709">
    <property type="entry name" value="Transcrip_reg"/>
    <property type="match status" value="1"/>
</dbReference>
<dbReference type="SUPFAM" id="SSF75625">
    <property type="entry name" value="YebC-like"/>
    <property type="match status" value="1"/>
</dbReference>